<keyword id="KW-0968">Cytoplasmic vesicle</keyword>
<keyword id="KW-0256">Endoplasmic reticulum</keyword>
<keyword id="KW-0931">ER-Golgi transport</keyword>
<keyword id="KW-0333">Golgi apparatus</keyword>
<keyword id="KW-0472">Membrane</keyword>
<keyword id="KW-0653">Protein transport</keyword>
<keyword id="KW-0675">Receptor</keyword>
<keyword id="KW-1185">Reference proteome</keyword>
<keyword id="KW-0812">Transmembrane</keyword>
<keyword id="KW-1133">Transmembrane helix</keyword>
<keyword id="KW-0813">Transport</keyword>
<organism>
    <name type="scientific">Xenopus laevis</name>
    <name type="common">African clawed frog</name>
    <dbReference type="NCBI Taxonomy" id="8355"/>
    <lineage>
        <taxon>Eukaryota</taxon>
        <taxon>Metazoa</taxon>
        <taxon>Chordata</taxon>
        <taxon>Craniata</taxon>
        <taxon>Vertebrata</taxon>
        <taxon>Euteleostomi</taxon>
        <taxon>Amphibia</taxon>
        <taxon>Batrachia</taxon>
        <taxon>Anura</taxon>
        <taxon>Pipoidea</taxon>
        <taxon>Pipidae</taxon>
        <taxon>Xenopodinae</taxon>
        <taxon>Xenopus</taxon>
        <taxon>Xenopus</taxon>
    </lineage>
</organism>
<proteinExistence type="evidence at transcript level"/>
<protein>
    <recommendedName>
        <fullName>ER lumen protein-retaining receptor 3</fullName>
    </recommendedName>
    <alternativeName>
        <fullName>KDEL endoplasmic reticulum protein retention receptor 3</fullName>
        <shortName>KDEL receptor 3</shortName>
    </alternativeName>
</protein>
<gene>
    <name type="primary">kdelr3</name>
    <name type="synonym">erd2</name>
    <name type="synonym">kdelr</name>
</gene>
<accession>O42580</accession>
<accession>Q5D084</accession>
<feature type="chain" id="PRO_0000194160" description="ER lumen protein-retaining receptor 3">
    <location>
        <begin position="1"/>
        <end position="214"/>
    </location>
</feature>
<feature type="topological domain" description="Lumenal" evidence="5">
    <location>
        <begin position="1"/>
        <end position="4"/>
    </location>
</feature>
<feature type="transmembrane region" description="Helical" evidence="4">
    <location>
        <begin position="5"/>
        <end position="24"/>
    </location>
</feature>
<feature type="topological domain" description="Cytoplasmic" evidence="5">
    <location>
        <begin position="25"/>
        <end position="32"/>
    </location>
</feature>
<feature type="transmembrane region" description="Helical" evidence="4">
    <location>
        <begin position="33"/>
        <end position="52"/>
    </location>
</feature>
<feature type="topological domain" description="Lumenal" evidence="5">
    <location>
        <begin position="53"/>
        <end position="58"/>
    </location>
</feature>
<feature type="transmembrane region" description="Helical" evidence="4">
    <location>
        <begin position="59"/>
        <end position="79"/>
    </location>
</feature>
<feature type="topological domain" description="Cytoplasmic" evidence="5">
    <location>
        <begin position="80"/>
        <end position="92"/>
    </location>
</feature>
<feature type="transmembrane region" description="Helical" evidence="4">
    <location>
        <begin position="93"/>
        <end position="110"/>
    </location>
</feature>
<feature type="topological domain" description="Lumenal" evidence="5">
    <location>
        <begin position="111"/>
        <end position="116"/>
    </location>
</feature>
<feature type="transmembrane region" description="Helical" evidence="4">
    <location>
        <begin position="117"/>
        <end position="135"/>
    </location>
</feature>
<feature type="topological domain" description="Cytoplasmic" evidence="5">
    <location>
        <begin position="136"/>
        <end position="149"/>
    </location>
</feature>
<feature type="transmembrane region" description="Helical" evidence="4">
    <location>
        <begin position="150"/>
        <end position="168"/>
    </location>
</feature>
<feature type="topological domain" description="Lumenal" evidence="5">
    <location>
        <begin position="169"/>
        <end position="178"/>
    </location>
</feature>
<feature type="transmembrane region" description="Helical" evidence="4">
    <location>
        <begin position="179"/>
        <end position="199"/>
    </location>
</feature>
<feature type="topological domain" description="Cytoplasmic" evidence="5">
    <location>
        <begin position="200"/>
        <end position="214"/>
    </location>
</feature>
<feature type="region of interest" description="Interaction with the K-D-E-L motif on target proteins" evidence="4">
    <location>
        <begin position="47"/>
        <end position="48"/>
    </location>
</feature>
<feature type="region of interest" description="Interaction with the K-D-E-L motif on target proteins" evidence="4">
    <location>
        <begin position="159"/>
        <end position="169"/>
    </location>
</feature>
<feature type="region of interest" description="Important for recycling of cargo proteins with the sequence motif K-D-E-L from the Golgi to the endoplasmic reticulum" evidence="3">
    <location>
        <begin position="204"/>
        <end position="207"/>
    </location>
</feature>
<feature type="site" description="Interaction with the K-D-E-L motif on target proteins" evidence="4">
    <location>
        <position position="5"/>
    </location>
</feature>
<feature type="site" description="Interaction with the K-D-E-L motif on target proteins" evidence="4">
    <location>
        <position position="117"/>
    </location>
</feature>
<feature type="site" description="Important for recycling of cargo proteins with the sequence motif K-D-E-L from the Golgi to the endoplasmic reticulum" evidence="2">
    <location>
        <position position="193"/>
    </location>
</feature>
<evidence type="ECO:0000250" key="1">
    <source>
        <dbReference type="UniProtKB" id="O43731"/>
    </source>
</evidence>
<evidence type="ECO:0000250" key="2">
    <source>
        <dbReference type="UniProtKB" id="P24390"/>
    </source>
</evidence>
<evidence type="ECO:0000250" key="3">
    <source>
        <dbReference type="UniProtKB" id="P33947"/>
    </source>
</evidence>
<evidence type="ECO:0000250" key="4">
    <source>
        <dbReference type="UniProtKB" id="Q5ZKX9"/>
    </source>
</evidence>
<evidence type="ECO:0000305" key="5"/>
<reference key="1">
    <citation type="submission" date="1997-09" db="EMBL/GenBank/DDBJ databases">
        <title>Xenopus laevis KDEL receptor.</title>
        <authorList>
            <person name="de Antoni A."/>
            <person name="Valle G."/>
        </authorList>
    </citation>
    <scope>NUCLEOTIDE SEQUENCE [MRNA]</scope>
    <source>
        <tissue>Liver</tissue>
    </source>
</reference>
<reference key="2">
    <citation type="submission" date="2003-06" db="EMBL/GenBank/DDBJ databases">
        <authorList>
            <consortium name="NIH - Xenopus Gene Collection (XGC) project"/>
        </authorList>
    </citation>
    <scope>NUCLEOTIDE SEQUENCE [LARGE SCALE MRNA]</scope>
</reference>
<comment type="function">
    <text evidence="1">Receptor for the C-terminal sequence motif K-D-E-L that is present on endoplasmic reticulum resident proteins and that mediates their recycling from the Golgi back to the endoplasmic reticulum.</text>
</comment>
<comment type="subcellular location">
    <subcellularLocation>
        <location evidence="1">Endoplasmic reticulum membrane</location>
        <topology evidence="4">Multi-pass membrane protein</topology>
    </subcellularLocation>
    <subcellularLocation>
        <location evidence="1">Golgi apparatus membrane</location>
        <topology evidence="4">Multi-pass membrane protein</topology>
    </subcellularLocation>
    <subcellularLocation>
        <location evidence="1">Cytoplasmic vesicle</location>
        <location evidence="1">COPI-coated vesicle membrane</location>
        <topology evidence="4">Multi-pass membrane protein</topology>
    </subcellularLocation>
    <text evidence="1">Localized in the Golgi in the absence of bound proteins with the sequence motif K-D-E-L. Trafficks back to the endoplasmic reticulum together with cargo proteins containing the sequence motif K-D-E-L.</text>
</comment>
<comment type="domain">
    <text evidence="2 4">Binds the C-terminal sequence motif K-D-E-L in a hydrophilic cavity between the transmembrane domains. This triggers a conformation change that exposes a Lys-rich patch on the cytosolic surface of the protein (By similarity). This patch mediates recycling from the Golgi to the endoplasmic reticulum, probably via COPI vesicles (By similarity).</text>
</comment>
<comment type="similarity">
    <text evidence="5">Belongs to the ERD2 family.</text>
</comment>
<sequence length="214" mass="25010">MNIFRILGDVSHLLAIIILLLKMWKSKSCAGISGKSQLLFALVFTTRYLDLFTVFISPYNTVMKIIFLACAYVTVYLIYGKLRKSYDSENDTFRLEFLLVPVIGLSFLENYEFTPLEILWTFSIYLESVAILPQLFMISKTGEAESITTHYLFFLGLYRVLYLANWIWRYHTEKFYDQIAVVSGVVQTIFYFDFFYLYVTKVLKGKKLSLPMPV</sequence>
<name>ERD23_XENLA</name>
<dbReference type="EMBL" id="AJ001533">
    <property type="protein sequence ID" value="CAA04817.1"/>
    <property type="molecule type" value="mRNA"/>
</dbReference>
<dbReference type="EMBL" id="BC054181">
    <property type="protein sequence ID" value="AAH54181.1"/>
    <property type="molecule type" value="mRNA"/>
</dbReference>
<dbReference type="RefSeq" id="NP_001079763.1">
    <property type="nucleotide sequence ID" value="NM_001086294.1"/>
</dbReference>
<dbReference type="SMR" id="O42580"/>
<dbReference type="DNASU" id="379453"/>
<dbReference type="GeneID" id="379453"/>
<dbReference type="KEGG" id="xla:379453"/>
<dbReference type="AGR" id="Xenbase:XB-GENE-865837"/>
<dbReference type="CTD" id="379453"/>
<dbReference type="Xenbase" id="XB-GENE-865837">
    <property type="gene designation" value="kdelr3.L"/>
</dbReference>
<dbReference type="OMA" id="QEVLWAF"/>
<dbReference type="OrthoDB" id="7694678at2759"/>
<dbReference type="Proteomes" id="UP000186698">
    <property type="component" value="Chromosome 4L"/>
</dbReference>
<dbReference type="Bgee" id="379453">
    <property type="expression patterns" value="Expressed in egg cell and 19 other cell types or tissues"/>
</dbReference>
<dbReference type="GO" id="GO:0005801">
    <property type="term" value="C:cis-Golgi network"/>
    <property type="evidence" value="ECO:0000318"/>
    <property type="project" value="GO_Central"/>
</dbReference>
<dbReference type="GO" id="GO:0030663">
    <property type="term" value="C:COPI-coated vesicle membrane"/>
    <property type="evidence" value="ECO:0007669"/>
    <property type="project" value="UniProtKB-SubCell"/>
</dbReference>
<dbReference type="GO" id="GO:0005783">
    <property type="term" value="C:endoplasmic reticulum"/>
    <property type="evidence" value="ECO:0000318"/>
    <property type="project" value="GO_Central"/>
</dbReference>
<dbReference type="GO" id="GO:0005789">
    <property type="term" value="C:endoplasmic reticulum membrane"/>
    <property type="evidence" value="ECO:0000250"/>
    <property type="project" value="UniProtKB"/>
</dbReference>
<dbReference type="GO" id="GO:0000139">
    <property type="term" value="C:Golgi membrane"/>
    <property type="evidence" value="ECO:0000250"/>
    <property type="project" value="UniProtKB"/>
</dbReference>
<dbReference type="GO" id="GO:0046923">
    <property type="term" value="F:ER retention sequence binding"/>
    <property type="evidence" value="ECO:0000318"/>
    <property type="project" value="GO_Central"/>
</dbReference>
<dbReference type="GO" id="GO:0005046">
    <property type="term" value="F:KDEL sequence binding"/>
    <property type="evidence" value="ECO:0000250"/>
    <property type="project" value="UniProtKB"/>
</dbReference>
<dbReference type="GO" id="GO:0006621">
    <property type="term" value="P:protein retention in ER lumen"/>
    <property type="evidence" value="ECO:0000318"/>
    <property type="project" value="GO_Central"/>
</dbReference>
<dbReference type="GO" id="GO:0015031">
    <property type="term" value="P:protein transport"/>
    <property type="evidence" value="ECO:0007669"/>
    <property type="project" value="UniProtKB-KW"/>
</dbReference>
<dbReference type="GO" id="GO:0006890">
    <property type="term" value="P:retrograde vesicle-mediated transport, Golgi to endoplasmic reticulum"/>
    <property type="evidence" value="ECO:0000250"/>
    <property type="project" value="UniProtKB"/>
</dbReference>
<dbReference type="InterPro" id="IPR000133">
    <property type="entry name" value="ER_ret_rcpt"/>
</dbReference>
<dbReference type="PANTHER" id="PTHR10585">
    <property type="entry name" value="ER LUMEN PROTEIN RETAINING RECEPTOR"/>
    <property type="match status" value="1"/>
</dbReference>
<dbReference type="Pfam" id="PF00810">
    <property type="entry name" value="ER_lumen_recept"/>
    <property type="match status" value="1"/>
</dbReference>
<dbReference type="PRINTS" id="PR00660">
    <property type="entry name" value="ERLUMENR"/>
</dbReference>
<dbReference type="PROSITE" id="PS00951">
    <property type="entry name" value="ER_LUMEN_RECEPTOR_1"/>
    <property type="match status" value="1"/>
</dbReference>
<dbReference type="PROSITE" id="PS00952">
    <property type="entry name" value="ER_LUMEN_RECEPTOR_2"/>
    <property type="match status" value="1"/>
</dbReference>